<comment type="function">
    <text evidence="1">Required for calcium-mediated regulation of ciliary beat frequency and mucociliary clearance in the airway. Might be involved in the regulation of intracellular calcium in tracheal epithelial cells.</text>
</comment>
<comment type="subunit">
    <text evidence="2">Interacts with LYPD3 and DAG1 (alphaDAG1).</text>
</comment>
<comment type="interaction">
    <interactant intactId="EBI-3925742">
        <id>Q8TD06</id>
    </interactant>
    <interactant intactId="EBI-11978055">
        <id>Q10567-3</id>
        <label>AP1B1</label>
    </interactant>
    <organismsDiffer>false</organismsDiffer>
    <experiments>3</experiments>
</comment>
<comment type="interaction">
    <interactant intactId="EBI-3925742">
        <id>Q8TD06</id>
    </interactant>
    <interactant intactId="EBI-744545">
        <id>Q8NEC5</id>
        <label>CATSPER1</label>
    </interactant>
    <organismsDiffer>false</organismsDiffer>
    <experiments>3</experiments>
</comment>
<comment type="interaction">
    <interactant intactId="EBI-3925742">
        <id>Q8TD06</id>
    </interactant>
    <interactant intactId="EBI-13046140">
        <id>P15529-3</id>
        <label>CD46</label>
    </interactant>
    <organismsDiffer>false</organismsDiffer>
    <experiments>3</experiments>
</comment>
<comment type="interaction">
    <interactant intactId="EBI-3925742">
        <id>Q8TD06</id>
    </interactant>
    <interactant intactId="EBI-2130213">
        <id>Q99675</id>
        <label>CGRRF1</label>
    </interactant>
    <organismsDiffer>false</organismsDiffer>
    <experiments>3</experiments>
</comment>
<comment type="interaction">
    <interactant intactId="EBI-3925742">
        <id>Q8TD06</id>
    </interactant>
    <interactant intactId="EBI-741032">
        <id>Q8NE01</id>
        <label>CNNM3</label>
    </interactant>
    <organismsDiffer>false</organismsDiffer>
    <experiments>3</experiments>
</comment>
<comment type="interaction">
    <interactant intactId="EBI-3925742">
        <id>Q8TD06</id>
    </interactant>
    <interactant intactId="EBI-2806959">
        <id>Q6ICB0</id>
        <label>DESI1</label>
    </interactant>
    <organismsDiffer>false</organismsDiffer>
    <experiments>3</experiments>
</comment>
<comment type="interaction">
    <interactant intactId="EBI-3925742">
        <id>Q8TD06</id>
    </interactant>
    <interactant intactId="EBI-526033">
        <id>Q9HAV5</id>
        <label>EDA2R</label>
    </interactant>
    <organismsDiffer>false</organismsDiffer>
    <experiments>3</experiments>
</comment>
<comment type="interaction">
    <interactant intactId="EBI-3925742">
        <id>Q8TD06</id>
    </interactant>
    <interactant intactId="EBI-359299">
        <id>O75477</id>
        <label>ERLIN1</label>
    </interactant>
    <organismsDiffer>false</organismsDiffer>
    <experiments>6</experiments>
</comment>
<comment type="interaction">
    <interactant intactId="EBI-3925742">
        <id>Q8TD06</id>
    </interactant>
    <interactant intactId="EBI-12175685">
        <id>Q14802-3</id>
        <label>FXYD3</label>
    </interactant>
    <organismsDiffer>false</organismsDiffer>
    <experiments>3</experiments>
</comment>
<comment type="interaction">
    <interactant intactId="EBI-3925742">
        <id>Q8TD06</id>
    </interactant>
    <interactant intactId="EBI-1052037">
        <id>Q8IUC1</id>
        <label>KRTAP11-1</label>
    </interactant>
    <organismsDiffer>false</organismsDiffer>
    <experiments>3</experiments>
</comment>
<comment type="interaction">
    <interactant intactId="EBI-3925742">
        <id>Q8TD06</id>
    </interactant>
    <interactant intactId="EBI-2830566">
        <id>Q9H400</id>
        <label>LIME1</label>
    </interactant>
    <organismsDiffer>false</organismsDiffer>
    <experiments>3</experiments>
</comment>
<comment type="interaction">
    <interactant intactId="EBI-3925742">
        <id>Q8TD06</id>
    </interactant>
    <interactant intactId="EBI-347619">
        <id>O15116</id>
        <label>LSM1</label>
    </interactant>
    <organismsDiffer>false</organismsDiffer>
    <experiments>3</experiments>
</comment>
<comment type="interaction">
    <interactant intactId="EBI-3925742">
        <id>Q8TD06</id>
    </interactant>
    <interactant intactId="EBI-6163737">
        <id>Q8N4V1</id>
        <label>MMGT1</label>
    </interactant>
    <organismsDiffer>false</organismsDiffer>
    <experiments>3</experiments>
</comment>
<comment type="interaction">
    <interactant intactId="EBI-3925742">
        <id>Q8TD06</id>
    </interactant>
    <interactant intactId="EBI-10262547">
        <id>Q8IXM6</id>
        <label>NRM</label>
    </interactant>
    <organismsDiffer>false</organismsDiffer>
    <experiments>3</experiments>
</comment>
<comment type="interaction">
    <interactant intactId="EBI-3925742">
        <id>Q8TD06</id>
    </interactant>
    <interactant intactId="EBI-741158">
        <id>Q96HA8</id>
        <label>NTAQ1</label>
    </interactant>
    <organismsDiffer>false</organismsDiffer>
    <experiments>3</experiments>
</comment>
<comment type="interaction">
    <interactant intactId="EBI-3925742">
        <id>Q8TD06</id>
    </interactant>
    <interactant intactId="EBI-347978">
        <id>P37198</id>
        <label>NUP62</label>
    </interactant>
    <organismsDiffer>false</organismsDiffer>
    <experiments>6</experiments>
</comment>
<comment type="interaction">
    <interactant intactId="EBI-3925742">
        <id>Q8TD06</id>
    </interactant>
    <interactant intactId="EBI-716063">
        <id>Q13113</id>
        <label>PDZK1IP1</label>
    </interactant>
    <organismsDiffer>false</organismsDiffer>
    <experiments>3</experiments>
</comment>
<comment type="interaction">
    <interactant intactId="EBI-3925742">
        <id>Q8TD06</id>
    </interactant>
    <interactant intactId="EBI-2506064">
        <id>O60831</id>
        <label>PRAF2</label>
    </interactant>
    <organismsDiffer>false</organismsDiffer>
    <experiments>3</experiments>
</comment>
<comment type="interaction">
    <interactant intactId="EBI-3925742">
        <id>Q8TD06</id>
    </interactant>
    <interactant intactId="EBI-10204280">
        <id>A0A0S2Z4U3</id>
        <label>SDC3</label>
    </interactant>
    <organismsDiffer>false</organismsDiffer>
    <experiments>3</experiments>
</comment>
<comment type="interaction">
    <interactant intactId="EBI-3925742">
        <id>Q8TD06</id>
    </interactant>
    <interactant intactId="EBI-347996">
        <id>O43765</id>
        <label>SGTA</label>
    </interactant>
    <organismsDiffer>false</organismsDiffer>
    <experiments>6</experiments>
</comment>
<comment type="interaction">
    <interactant intactId="EBI-3925742">
        <id>Q8TD06</id>
    </interactant>
    <interactant intactId="EBI-744081">
        <id>Q96EQ0</id>
        <label>SGTB</label>
    </interactant>
    <organismsDiffer>false</organismsDiffer>
    <experiments>8</experiments>
</comment>
<comment type="interaction">
    <interactant intactId="EBI-3925742">
        <id>Q8TD06</id>
    </interactant>
    <interactant intactId="EBI-12078338">
        <id>O43278-2</id>
        <label>SPINT1</label>
    </interactant>
    <organismsDiffer>false</organismsDiffer>
    <experiments>3</experiments>
</comment>
<comment type="interaction">
    <interactant intactId="EBI-3925742">
        <id>Q8TD06</id>
    </interactant>
    <interactant intactId="EBI-6268651">
        <id>Q9NPL8</id>
        <label>TIMMDC1</label>
    </interactant>
    <organismsDiffer>false</organismsDiffer>
    <experiments>3</experiments>
</comment>
<comment type="interaction">
    <interactant intactId="EBI-3925742">
        <id>Q8TD06</id>
    </interactant>
    <interactant intactId="EBI-8638294">
        <id>Q9NUH8</id>
        <label>TMEM14B</label>
    </interactant>
    <organismsDiffer>false</organismsDiffer>
    <experiments>3</experiments>
</comment>
<comment type="interaction">
    <interactant intactId="EBI-3925742">
        <id>Q8TD06</id>
    </interactant>
    <interactant intactId="EBI-741480">
        <id>Q9UMX0</id>
        <label>UBQLN1</label>
    </interactant>
    <organismsDiffer>false</organismsDiffer>
    <experiments>4</experiments>
</comment>
<comment type="interaction">
    <interactant intactId="EBI-3925742">
        <id>Q8TD06</id>
    </interactant>
    <interactant intactId="EBI-10173939">
        <id>Q9UMX0-2</id>
        <label>UBQLN1</label>
    </interactant>
    <organismsDiffer>false</organismsDiffer>
    <experiments>3</experiments>
</comment>
<comment type="interaction">
    <interactant intactId="EBI-3925742">
        <id>Q8TD06</id>
    </interactant>
    <interactant intactId="EBI-947187">
        <id>Q9UHD9</id>
        <label>UBQLN2</label>
    </interactant>
    <organismsDiffer>false</organismsDiffer>
    <experiments>6</experiments>
</comment>
<comment type="subcellular location">
    <subcellularLocation>
        <location evidence="4 7">Endoplasmic reticulum</location>
    </subcellularLocation>
    <text evidence="10">Found in the cytoplasm, which could include the endoplasmic reticulum.</text>
</comment>
<comment type="tissue specificity">
    <text evidence="7 8">Expressed in the lung, in the ciliated cells of the airway epithelium (PubMed:25751668). Expression increased with differentiation of airway epithelial cells (PubMed:25751668). Not detected in the mucous cells (PubMed:25751668). Expressed in ciliated cells in the oviduct (PubMed:26170690). Also detected in stomach, colon, prostate and liver (PubMed:25751668). Expressed in breast, ovary, prostate and liver cancer (PubMed:26170690). Expression is associated with the level of differentiation of breast cancer (at protein level) (PubMed:26170690).</text>
</comment>
<comment type="induction">
    <text evidence="5 6 7">Not induced as part of the cellular response to endoplasmic reticulum stress (PubMed:25751668). Up-regulated by androgens and by estrogens in prostate cancer cells (PubMed:23294566) Up-regulated by a hormone (estrogen-receptor alpha) independent mechanism in ovarian cancer (PubMed:22361111).</text>
</comment>
<comment type="similarity">
    <text evidence="9">Belongs to the AGR family.</text>
</comment>
<feature type="signal peptide" evidence="3">
    <location>
        <begin position="1"/>
        <end position="21"/>
    </location>
</feature>
<feature type="chain" id="PRO_0000001040" description="Anterior gradient protein 3">
    <location>
        <begin position="22"/>
        <end position="166"/>
    </location>
</feature>
<feature type="short sequence motif" description="Prevents secretion from ER" evidence="4">
    <location>
        <begin position="163"/>
        <end position="166"/>
    </location>
</feature>
<feature type="mutagenesis site" description="Leads to Golgi localization;." evidence="4">
    <location>
        <begin position="163"/>
        <end position="166"/>
    </location>
</feature>
<feature type="strand" evidence="13">
    <location>
        <begin position="33"/>
        <end position="35"/>
    </location>
</feature>
<feature type="helix" evidence="13">
    <location>
        <begin position="48"/>
        <end position="58"/>
    </location>
</feature>
<feature type="strand" evidence="13">
    <location>
        <begin position="62"/>
        <end position="66"/>
    </location>
</feature>
<feature type="helix" evidence="13">
    <location>
        <begin position="72"/>
        <end position="83"/>
    </location>
</feature>
<feature type="helix" evidence="13">
    <location>
        <begin position="85"/>
        <end position="93"/>
    </location>
</feature>
<feature type="strand" evidence="13">
    <location>
        <begin position="96"/>
        <end position="102"/>
    </location>
</feature>
<feature type="helix" evidence="13">
    <location>
        <begin position="107"/>
        <end position="109"/>
    </location>
</feature>
<feature type="strand" evidence="13">
    <location>
        <begin position="116"/>
        <end position="122"/>
    </location>
</feature>
<feature type="helix" evidence="13">
    <location>
        <begin position="145"/>
        <end position="147"/>
    </location>
</feature>
<feature type="helix" evidence="13">
    <location>
        <begin position="148"/>
        <end position="159"/>
    </location>
</feature>
<dbReference type="EMBL" id="AY069977">
    <property type="protein sequence ID" value="AAL55402.1"/>
    <property type="molecule type" value="mRNA"/>
</dbReference>
<dbReference type="EMBL" id="AY359065">
    <property type="protein sequence ID" value="AAQ89424.1"/>
    <property type="molecule type" value="mRNA"/>
</dbReference>
<dbReference type="EMBL" id="CH236948">
    <property type="protein sequence ID" value="EAL24282.1"/>
    <property type="molecule type" value="Genomic_DNA"/>
</dbReference>
<dbReference type="EMBL" id="CH471073">
    <property type="protein sequence ID" value="EAW93685.1"/>
    <property type="molecule type" value="Genomic_DNA"/>
</dbReference>
<dbReference type="EMBL" id="BC058284">
    <property type="protein sequence ID" value="AAH58284.1"/>
    <property type="molecule type" value="mRNA"/>
</dbReference>
<dbReference type="CCDS" id="CCDS5365.1"/>
<dbReference type="RefSeq" id="NP_789783.1">
    <property type="nucleotide sequence ID" value="NM_176813.5"/>
</dbReference>
<dbReference type="RefSeq" id="XP_005249684.1">
    <property type="nucleotide sequence ID" value="XM_005249627.2"/>
</dbReference>
<dbReference type="RefSeq" id="XP_047275884.1">
    <property type="nucleotide sequence ID" value="XM_047419928.1"/>
</dbReference>
<dbReference type="RefSeq" id="XP_054213338.1">
    <property type="nucleotide sequence ID" value="XM_054357363.1"/>
</dbReference>
<dbReference type="PDB" id="3PH9">
    <property type="method" value="X-ray"/>
    <property type="resolution" value="1.83 A"/>
    <property type="chains" value="A/B=24-166"/>
</dbReference>
<dbReference type="PDBsum" id="3PH9"/>
<dbReference type="SMR" id="Q8TD06"/>
<dbReference type="BioGRID" id="127586">
    <property type="interactions" value="43"/>
</dbReference>
<dbReference type="FunCoup" id="Q8TD06">
    <property type="interactions" value="31"/>
</dbReference>
<dbReference type="IntAct" id="Q8TD06">
    <property type="interactions" value="34"/>
</dbReference>
<dbReference type="MINT" id="Q8TD06"/>
<dbReference type="STRING" id="9606.ENSP00000308606"/>
<dbReference type="GlyCosmos" id="Q8TD06">
    <property type="glycosylation" value="3 sites, 1 glycan"/>
</dbReference>
<dbReference type="GlyGen" id="Q8TD06">
    <property type="glycosylation" value="3 sites, 1 O-linked glycan (3 sites)"/>
</dbReference>
<dbReference type="iPTMnet" id="Q8TD06"/>
<dbReference type="PhosphoSitePlus" id="Q8TD06"/>
<dbReference type="BioMuta" id="AGR3"/>
<dbReference type="DMDM" id="66774045"/>
<dbReference type="jPOST" id="Q8TD06"/>
<dbReference type="MassIVE" id="Q8TD06"/>
<dbReference type="PaxDb" id="9606-ENSP00000308606"/>
<dbReference type="PeptideAtlas" id="Q8TD06"/>
<dbReference type="ProteomicsDB" id="74205"/>
<dbReference type="Antibodypedia" id="25286">
    <property type="antibodies" value="285 antibodies from 33 providers"/>
</dbReference>
<dbReference type="DNASU" id="155465"/>
<dbReference type="Ensembl" id="ENST00000310398.7">
    <property type="protein sequence ID" value="ENSP00000308606.2"/>
    <property type="gene ID" value="ENSG00000173467.9"/>
</dbReference>
<dbReference type="GeneID" id="155465"/>
<dbReference type="KEGG" id="hsa:155465"/>
<dbReference type="MANE-Select" id="ENST00000310398.7">
    <property type="protein sequence ID" value="ENSP00000308606.2"/>
    <property type="RefSeq nucleotide sequence ID" value="NM_176813.5"/>
    <property type="RefSeq protein sequence ID" value="NP_789783.1"/>
</dbReference>
<dbReference type="UCSC" id="uc003sts.4">
    <property type="organism name" value="human"/>
</dbReference>
<dbReference type="AGR" id="HGNC:24167"/>
<dbReference type="CTD" id="155465"/>
<dbReference type="DisGeNET" id="155465"/>
<dbReference type="GeneCards" id="AGR3"/>
<dbReference type="HGNC" id="HGNC:24167">
    <property type="gene designation" value="AGR3"/>
</dbReference>
<dbReference type="HPA" id="ENSG00000173467">
    <property type="expression patterns" value="Tissue enhanced (fallopian tube, intestine, lung)"/>
</dbReference>
<dbReference type="MIM" id="609482">
    <property type="type" value="gene"/>
</dbReference>
<dbReference type="neXtProt" id="NX_Q8TD06"/>
<dbReference type="OpenTargets" id="ENSG00000173467"/>
<dbReference type="PharmGKB" id="PA162375917"/>
<dbReference type="VEuPathDB" id="HostDB:ENSG00000173467"/>
<dbReference type="eggNOG" id="ENOG502R72A">
    <property type="taxonomic scope" value="Eukaryota"/>
</dbReference>
<dbReference type="GeneTree" id="ENSGT00530000063273"/>
<dbReference type="HOGENOM" id="CLU_088048_1_0_1"/>
<dbReference type="InParanoid" id="Q8TD06"/>
<dbReference type="OMA" id="PILIENM"/>
<dbReference type="OrthoDB" id="262308at2759"/>
<dbReference type="PAN-GO" id="Q8TD06">
    <property type="GO annotations" value="3 GO annotations based on evolutionary models"/>
</dbReference>
<dbReference type="PhylomeDB" id="Q8TD06"/>
<dbReference type="TreeFam" id="TF321449"/>
<dbReference type="PathwayCommons" id="Q8TD06"/>
<dbReference type="SignaLink" id="Q8TD06"/>
<dbReference type="BioGRID-ORCS" id="155465">
    <property type="hits" value="42 hits in 1107 CRISPR screens"/>
</dbReference>
<dbReference type="ChiTaRS" id="AGR3">
    <property type="organism name" value="human"/>
</dbReference>
<dbReference type="EvolutionaryTrace" id="Q8TD06"/>
<dbReference type="GeneWiki" id="AGR3"/>
<dbReference type="GenomeRNAi" id="155465"/>
<dbReference type="Pharos" id="Q8TD06">
    <property type="development level" value="Tbio"/>
</dbReference>
<dbReference type="PRO" id="PR:Q8TD06"/>
<dbReference type="Proteomes" id="UP000005640">
    <property type="component" value="Chromosome 7"/>
</dbReference>
<dbReference type="RNAct" id="Q8TD06">
    <property type="molecule type" value="protein"/>
</dbReference>
<dbReference type="Bgee" id="ENSG00000173467">
    <property type="expression patterns" value="Expressed in bronchial epithelial cell and 128 other cell types or tissues"/>
</dbReference>
<dbReference type="ExpressionAtlas" id="Q8TD06">
    <property type="expression patterns" value="baseline and differential"/>
</dbReference>
<dbReference type="GO" id="GO:0005783">
    <property type="term" value="C:endoplasmic reticulum"/>
    <property type="evidence" value="ECO:0000314"/>
    <property type="project" value="HPA"/>
</dbReference>
<dbReference type="GO" id="GO:0043231">
    <property type="term" value="C:intracellular membrane-bounded organelle"/>
    <property type="evidence" value="ECO:0000314"/>
    <property type="project" value="HPA"/>
</dbReference>
<dbReference type="GO" id="GO:0002162">
    <property type="term" value="F:dystroglycan binding"/>
    <property type="evidence" value="ECO:0000314"/>
    <property type="project" value="UniProtKB"/>
</dbReference>
<dbReference type="CDD" id="cd02960">
    <property type="entry name" value="AGR"/>
    <property type="match status" value="1"/>
</dbReference>
<dbReference type="FunFam" id="3.40.30.10:FF:000036">
    <property type="entry name" value="anterior gradient protein 2 homolog"/>
    <property type="match status" value="1"/>
</dbReference>
<dbReference type="Gene3D" id="3.40.30.10">
    <property type="entry name" value="Glutaredoxin"/>
    <property type="match status" value="1"/>
</dbReference>
<dbReference type="InterPro" id="IPR051099">
    <property type="entry name" value="AGR/TXD"/>
</dbReference>
<dbReference type="InterPro" id="IPR036249">
    <property type="entry name" value="Thioredoxin-like_sf"/>
</dbReference>
<dbReference type="PANTHER" id="PTHR15337:SF5">
    <property type="entry name" value="ANTERIOR GRADIENT PROTEIN 3"/>
    <property type="match status" value="1"/>
</dbReference>
<dbReference type="PANTHER" id="PTHR15337">
    <property type="entry name" value="ANTERIOR GRADIENT PROTEIN-RELATED"/>
    <property type="match status" value="1"/>
</dbReference>
<dbReference type="Pfam" id="PF13899">
    <property type="entry name" value="Thioredoxin_7"/>
    <property type="match status" value="1"/>
</dbReference>
<dbReference type="SUPFAM" id="SSF52833">
    <property type="entry name" value="Thioredoxin-like"/>
    <property type="match status" value="1"/>
</dbReference>
<protein>
    <recommendedName>
        <fullName>Anterior gradient protein 3</fullName>
        <shortName>AG-3</shortName>
        <shortName>AG3</shortName>
        <shortName>hAG-3</shortName>
    </recommendedName>
    <alternativeName>
        <fullName evidence="11">Anterior gradient 3 homolog</fullName>
    </alternativeName>
    <alternativeName>
        <fullName evidence="11">Breast cancer membrane protein 11</fullName>
    </alternativeName>
    <alternativeName>
        <fullName evidence="11">Protein disulfide isomerase family A, member 18</fullName>
    </alternativeName>
</protein>
<name>AGR3_HUMAN</name>
<organism>
    <name type="scientific">Homo sapiens</name>
    <name type="common">Human</name>
    <dbReference type="NCBI Taxonomy" id="9606"/>
    <lineage>
        <taxon>Eukaryota</taxon>
        <taxon>Metazoa</taxon>
        <taxon>Chordata</taxon>
        <taxon>Craniata</taxon>
        <taxon>Vertebrata</taxon>
        <taxon>Euteleostomi</taxon>
        <taxon>Mammalia</taxon>
        <taxon>Eutheria</taxon>
        <taxon>Euarchontoglires</taxon>
        <taxon>Primates</taxon>
        <taxon>Haplorrhini</taxon>
        <taxon>Catarrhini</taxon>
        <taxon>Hominidae</taxon>
        <taxon>Homo</taxon>
    </lineage>
</organism>
<gene>
    <name type="primary">AGR3</name>
    <name type="synonym">BCMP11</name>
    <name type="synonym">PDIA18</name>
    <name type="ORF">UNQ642/PRO1272</name>
</gene>
<proteinExistence type="evidence at protein level"/>
<sequence length="166" mass="19171">MMLHSALGLCLLLVTVSSNLAIAIKKEKRPPQTLSRGWGDDITWVQTYEEGLFYAQKSKKPLMVIHHLEDCQYSQALKKVFAQNEEIQEMAQNKFIMLNLMHETTDKNLSPDGQYVPRIMFVDPSLTVRADIAGRYSNRLYTYEPRDLPLLIENMKKALRLIQSEL</sequence>
<evidence type="ECO:0000250" key="1">
    <source>
        <dbReference type="UniProtKB" id="Q8R3W7"/>
    </source>
</evidence>
<evidence type="ECO:0000269" key="2">
    <source>
    </source>
</evidence>
<evidence type="ECO:0000269" key="3">
    <source>
    </source>
</evidence>
<evidence type="ECO:0000269" key="4">
    <source>
    </source>
</evidence>
<evidence type="ECO:0000269" key="5">
    <source>
    </source>
</evidence>
<evidence type="ECO:0000269" key="6">
    <source>
    </source>
</evidence>
<evidence type="ECO:0000269" key="7">
    <source>
    </source>
</evidence>
<evidence type="ECO:0000269" key="8">
    <source>
    </source>
</evidence>
<evidence type="ECO:0000305" key="9"/>
<evidence type="ECO:0000305" key="10">
    <source>
    </source>
</evidence>
<evidence type="ECO:0000312" key="11">
    <source>
        <dbReference type="HGNC" id="HGNC:24167"/>
    </source>
</evidence>
<evidence type="ECO:0007744" key="12">
    <source>
        <dbReference type="PDB" id="3PH9"/>
    </source>
</evidence>
<evidence type="ECO:0007829" key="13">
    <source>
        <dbReference type="PDB" id="3PH9"/>
    </source>
</evidence>
<accession>Q8TD06</accession>
<accession>A4D120</accession>
<reference key="1">
    <citation type="journal article" date="2003" name="J. Biol. Chem.">
        <title>Comprehensive proteomic analysis of breast cancer cell membranes reveals unique proteins with potential roles in clinical cancer.</title>
        <authorList>
            <person name="Adam P.J."/>
            <person name="Boyd R."/>
            <person name="Tyson K.L."/>
            <person name="Fletcher G.C."/>
            <person name="Stamps A."/>
            <person name="Hudson L."/>
            <person name="Poyser H.R."/>
            <person name="Redpath N."/>
            <person name="Griffiths M."/>
            <person name="Steers G."/>
            <person name="Harris A.L."/>
            <person name="Patel S."/>
            <person name="Berry J."/>
            <person name="Loader J.A."/>
            <person name="Townsend R.R."/>
            <person name="Daviet L."/>
            <person name="Legrain P."/>
            <person name="Parekh R."/>
            <person name="Terrett J.A."/>
        </authorList>
    </citation>
    <scope>NUCLEOTIDE SEQUENCE [MRNA]</scope>
</reference>
<reference key="2">
    <citation type="journal article" date="2003" name="Genome Res.">
        <title>The secreted protein discovery initiative (SPDI), a large-scale effort to identify novel human secreted and transmembrane proteins: a bioinformatics assessment.</title>
        <authorList>
            <person name="Clark H.F."/>
            <person name="Gurney A.L."/>
            <person name="Abaya E."/>
            <person name="Baker K."/>
            <person name="Baldwin D.T."/>
            <person name="Brush J."/>
            <person name="Chen J."/>
            <person name="Chow B."/>
            <person name="Chui C."/>
            <person name="Crowley C."/>
            <person name="Currell B."/>
            <person name="Deuel B."/>
            <person name="Dowd P."/>
            <person name="Eaton D."/>
            <person name="Foster J.S."/>
            <person name="Grimaldi C."/>
            <person name="Gu Q."/>
            <person name="Hass P.E."/>
            <person name="Heldens S."/>
            <person name="Huang A."/>
            <person name="Kim H.S."/>
            <person name="Klimowski L."/>
            <person name="Jin Y."/>
            <person name="Johnson S."/>
            <person name="Lee J."/>
            <person name="Lewis L."/>
            <person name="Liao D."/>
            <person name="Mark M.R."/>
            <person name="Robbie E."/>
            <person name="Sanchez C."/>
            <person name="Schoenfeld J."/>
            <person name="Seshagiri S."/>
            <person name="Simmons L."/>
            <person name="Singh J."/>
            <person name="Smith V."/>
            <person name="Stinson J."/>
            <person name="Vagts A."/>
            <person name="Vandlen R.L."/>
            <person name="Watanabe C."/>
            <person name="Wieand D."/>
            <person name="Woods K."/>
            <person name="Xie M.-H."/>
            <person name="Yansura D.G."/>
            <person name="Yi S."/>
            <person name="Yu G."/>
            <person name="Yuan J."/>
            <person name="Zhang M."/>
            <person name="Zhang Z."/>
            <person name="Goddard A.D."/>
            <person name="Wood W.I."/>
            <person name="Godowski P.J."/>
            <person name="Gray A.M."/>
        </authorList>
    </citation>
    <scope>NUCLEOTIDE SEQUENCE [LARGE SCALE MRNA]</scope>
</reference>
<reference key="3">
    <citation type="journal article" date="2003" name="Science">
        <title>Human chromosome 7: DNA sequence and biology.</title>
        <authorList>
            <person name="Scherer S.W."/>
            <person name="Cheung J."/>
            <person name="MacDonald J.R."/>
            <person name="Osborne L.R."/>
            <person name="Nakabayashi K."/>
            <person name="Herbrick J.-A."/>
            <person name="Carson A.R."/>
            <person name="Parker-Katiraee L."/>
            <person name="Skaug J."/>
            <person name="Khaja R."/>
            <person name="Zhang J."/>
            <person name="Hudek A.K."/>
            <person name="Li M."/>
            <person name="Haddad M."/>
            <person name="Duggan G.E."/>
            <person name="Fernandez B.A."/>
            <person name="Kanematsu E."/>
            <person name="Gentles S."/>
            <person name="Christopoulos C.C."/>
            <person name="Choufani S."/>
            <person name="Kwasnicka D."/>
            <person name="Zheng X.H."/>
            <person name="Lai Z."/>
            <person name="Nusskern D.R."/>
            <person name="Zhang Q."/>
            <person name="Gu Z."/>
            <person name="Lu F."/>
            <person name="Zeesman S."/>
            <person name="Nowaczyk M.J."/>
            <person name="Teshima I."/>
            <person name="Chitayat D."/>
            <person name="Shuman C."/>
            <person name="Weksberg R."/>
            <person name="Zackai E.H."/>
            <person name="Grebe T.A."/>
            <person name="Cox S.R."/>
            <person name="Kirkpatrick S.J."/>
            <person name="Rahman N."/>
            <person name="Friedman J.M."/>
            <person name="Heng H.H.Q."/>
            <person name="Pelicci P.G."/>
            <person name="Lo-Coco F."/>
            <person name="Belloni E."/>
            <person name="Shaffer L.G."/>
            <person name="Pober B."/>
            <person name="Morton C.C."/>
            <person name="Gusella J.F."/>
            <person name="Bruns G.A.P."/>
            <person name="Korf B.R."/>
            <person name="Quade B.J."/>
            <person name="Ligon A.H."/>
            <person name="Ferguson H."/>
            <person name="Higgins A.W."/>
            <person name="Leach N.T."/>
            <person name="Herrick S.R."/>
            <person name="Lemyre E."/>
            <person name="Farra C.G."/>
            <person name="Kim H.-G."/>
            <person name="Summers A.M."/>
            <person name="Gripp K.W."/>
            <person name="Roberts W."/>
            <person name="Szatmari P."/>
            <person name="Winsor E.J.T."/>
            <person name="Grzeschik K.-H."/>
            <person name="Teebi A."/>
            <person name="Minassian B.A."/>
            <person name="Kere J."/>
            <person name="Armengol L."/>
            <person name="Pujana M.A."/>
            <person name="Estivill X."/>
            <person name="Wilson M.D."/>
            <person name="Koop B.F."/>
            <person name="Tosi S."/>
            <person name="Moore G.E."/>
            <person name="Boright A.P."/>
            <person name="Zlotorynski E."/>
            <person name="Kerem B."/>
            <person name="Kroisel P.M."/>
            <person name="Petek E."/>
            <person name="Oscier D.G."/>
            <person name="Mould S.J."/>
            <person name="Doehner H."/>
            <person name="Doehner K."/>
            <person name="Rommens J.M."/>
            <person name="Vincent J.B."/>
            <person name="Venter J.C."/>
            <person name="Li P.W."/>
            <person name="Mural R.J."/>
            <person name="Adams M.D."/>
            <person name="Tsui L.-C."/>
        </authorList>
    </citation>
    <scope>NUCLEOTIDE SEQUENCE [LARGE SCALE GENOMIC DNA]</scope>
</reference>
<reference key="4">
    <citation type="submission" date="2005-07" db="EMBL/GenBank/DDBJ databases">
        <authorList>
            <person name="Mural R.J."/>
            <person name="Istrail S."/>
            <person name="Sutton G.G."/>
            <person name="Florea L."/>
            <person name="Halpern A.L."/>
            <person name="Mobarry C.M."/>
            <person name="Lippert R."/>
            <person name="Walenz B."/>
            <person name="Shatkay H."/>
            <person name="Dew I."/>
            <person name="Miller J.R."/>
            <person name="Flanigan M.J."/>
            <person name="Edwards N.J."/>
            <person name="Bolanos R."/>
            <person name="Fasulo D."/>
            <person name="Halldorsson B.V."/>
            <person name="Hannenhalli S."/>
            <person name="Turner R."/>
            <person name="Yooseph S."/>
            <person name="Lu F."/>
            <person name="Nusskern D.R."/>
            <person name="Shue B.C."/>
            <person name="Zheng X.H."/>
            <person name="Zhong F."/>
            <person name="Delcher A.L."/>
            <person name="Huson D.H."/>
            <person name="Kravitz S.A."/>
            <person name="Mouchard L."/>
            <person name="Reinert K."/>
            <person name="Remington K.A."/>
            <person name="Clark A.G."/>
            <person name="Waterman M.S."/>
            <person name="Eichler E.E."/>
            <person name="Adams M.D."/>
            <person name="Hunkapiller M.W."/>
            <person name="Myers E.W."/>
            <person name="Venter J.C."/>
        </authorList>
    </citation>
    <scope>NUCLEOTIDE SEQUENCE [LARGE SCALE GENOMIC DNA]</scope>
</reference>
<reference key="5">
    <citation type="journal article" date="2004" name="Genome Res.">
        <title>The status, quality, and expansion of the NIH full-length cDNA project: the Mammalian Gene Collection (MGC).</title>
        <authorList>
            <consortium name="The MGC Project Team"/>
        </authorList>
    </citation>
    <scope>NUCLEOTIDE SEQUENCE [LARGE SCALE MRNA]</scope>
    <source>
        <tissue>Lung</tissue>
    </source>
</reference>
<reference key="6">
    <citation type="journal article" date="2004" name="Protein Sci.">
        <title>Signal peptide prediction based on analysis of experimentally verified cleavage sites.</title>
        <authorList>
            <person name="Zhang Z."/>
            <person name="Henzel W.J."/>
        </authorList>
    </citation>
    <scope>PROTEIN SEQUENCE OF 22-36</scope>
</reference>
<reference key="7">
    <citation type="journal article" date="2003" name="Br. J. Cancer">
        <title>hAG-2 and hAG-3, human homologues of genes involved in differentiation, are associated with oestrogen receptor-positive breast tumours and interact with metastasis gene C4.4a and dystroglycan.</title>
        <authorList>
            <person name="Fletcher G.C."/>
            <person name="Patel S."/>
            <person name="Tyson K."/>
            <person name="Adam P.J."/>
            <person name="Schenker M."/>
            <person name="Loader J.A."/>
            <person name="Daviet L."/>
            <person name="Legrain P."/>
            <person name="Parekh R."/>
            <person name="Harris A.L."/>
            <person name="Terrett J.A."/>
        </authorList>
    </citation>
    <scope>INTERACTION WITH LYPD3 AND DAG1</scope>
</reference>
<reference key="8">
    <citation type="journal article" date="2007" name="J. Cell Biol.">
        <title>A molecular specificity code for the three mammalian KDEL receptors.</title>
        <authorList>
            <person name="Raykhel I."/>
            <person name="Alanen H."/>
            <person name="Salo K."/>
            <person name="Jurvansuu J."/>
            <person name="Nguyen V.D."/>
            <person name="Latva-Ranta M."/>
            <person name="Ruddock L."/>
        </authorList>
    </citation>
    <scope>SUBCELLULAR LOCATION</scope>
    <scope>MUTAGENESIS OF 163-GLN--LEU-166</scope>
</reference>
<reference key="9">
    <citation type="journal article" date="2012" name="J. Immunol. Methods">
        <title>Anterior Gradient-3: a novel biomarker for ovarian cancer that mediates cisplatin resistance in xenograft models.</title>
        <authorList>
            <person name="Gray T.A."/>
            <person name="MacLaine N.J."/>
            <person name="Michie C.O."/>
            <person name="Bouchalova P."/>
            <person name="Murray E."/>
            <person name="Howie J."/>
            <person name="Hrstka R."/>
            <person name="Maslon M.M."/>
            <person name="Nenutil R."/>
            <person name="Vojtesek B."/>
            <person name="Langdon S."/>
            <person name="Hayward L."/>
            <person name="Gourley C."/>
            <person name="Hupp T.R."/>
        </authorList>
    </citation>
    <scope>INDUCTION</scope>
</reference>
<reference key="10">
    <citation type="journal article" date="2013" name="FEBS J.">
        <title>Anterior gradient 2 and 3--two prototype androgen-responsive genes transcriptionally upregulated by androgens and by oestrogens in prostate cancer cells.</title>
        <authorList>
            <person name="Bu H."/>
            <person name="Schweiger M.R."/>
            <person name="Manke T."/>
            <person name="Wunderlich A."/>
            <person name="Timmermann B."/>
            <person name="Kerick M."/>
            <person name="Pasqualini L."/>
            <person name="Shehu E."/>
            <person name="Fuchsberger C."/>
            <person name="Cato A.C."/>
            <person name="Klocker H."/>
        </authorList>
    </citation>
    <scope>INDUCTION</scope>
</reference>
<reference key="11">
    <citation type="journal article" date="2015" name="Am. J. Respir. Cell Mol. Biol.">
        <title>The ER resident protein AGR3 is required for regulation of ciliary beat frequency in the airway.</title>
        <authorList>
            <person name="Bonser L.R."/>
            <person name="Schroeder B.W."/>
            <person name="Ostrin L.A."/>
            <person name="Baumlin N."/>
            <person name="Olson J.L."/>
            <person name="Salathe M."/>
            <person name="Erle D.J."/>
        </authorList>
    </citation>
    <scope>TISSUE SPECIFICITY</scope>
    <scope>INDUCTION</scope>
    <scope>SUBCELLULAR LOCATION</scope>
</reference>
<reference key="12">
    <citation type="journal article" date="2015" name="Onco Targets Ther.">
        <title>Anterior gradient protein 3 is associated with less aggressive tumors and better outcome of breast cancer patients.</title>
        <authorList>
            <person name="Obacz J."/>
            <person name="Brychtova V."/>
            <person name="Podhorec J."/>
            <person name="Fabian P."/>
            <person name="Dobes P."/>
            <person name="Vojtesek B."/>
            <person name="Hrstka R."/>
        </authorList>
    </citation>
    <scope>TISSUE SPECIFICITY</scope>
    <scope>SUBCELLULAR LOCATION</scope>
</reference>
<reference evidence="12" key="13">
    <citation type="submission" date="2010-11" db="PDB data bank">
        <title>Crystal structure of the human anterior gradient protein 3.</title>
        <authorList>
            <person name="Nguyen V.D."/>
            <person name="Ruddock L.W."/>
            <person name="Salin M."/>
            <person name="Wierenga R.K."/>
        </authorList>
    </citation>
    <scope>X-RAY CRYSTALLOGRAPHY (1.83 ANGSTROMS) OF 24-166</scope>
</reference>
<keyword id="KW-0002">3D-structure</keyword>
<keyword id="KW-0903">Direct protein sequencing</keyword>
<keyword id="KW-0256">Endoplasmic reticulum</keyword>
<keyword id="KW-1267">Proteomics identification</keyword>
<keyword id="KW-1185">Reference proteome</keyword>
<keyword id="KW-0732">Signal</keyword>